<evidence type="ECO:0000250" key="1">
    <source>
        <dbReference type="UniProtKB" id="P0AF24"/>
    </source>
</evidence>
<evidence type="ECO:0000269" key="2">
    <source>
    </source>
</evidence>
<evidence type="ECO:0000303" key="3">
    <source>
    </source>
</evidence>
<evidence type="ECO:0000305" key="4"/>
<evidence type="ECO:0000305" key="5">
    <source>
    </source>
</evidence>
<evidence type="ECO:0000312" key="6">
    <source>
        <dbReference type="EMBL" id="BAF55130.1"/>
    </source>
</evidence>
<sequence>MTVNISYLTDMDGVLIKEGEMIPGADRFLQSLTDNNVEFMVLTNNSIFTPRDLSARLKTSGLDIPPERIWTSATATAHFLKSQVKEGTAYVVGESGLTTALHTAGWILTDANPEFVVLGETRTYSFEAITTAINLILGGARFICTNPDVTGPSPSGILPATGSVAALITAATGAEPYYIGKPNPVMMRSALNTIGAHSEHTVMIGDRMDTDVKSGLEAGLSTVLVRSGISDDAEIRRYPFRPTHVINSIADLADCWDDPFGDGAFHVPDEQQFTD</sequence>
<name>HDPA_CORGB</name>
<accession>A4QFW4</accession>
<keyword id="KW-0119">Carbohydrate metabolism</keyword>
<keyword id="KW-0378">Hydrolase</keyword>
<keyword id="KW-0460">Magnesium</keyword>
<keyword id="KW-0479">Metal-binding</keyword>
<dbReference type="EC" id="3.1.3.-" evidence="2"/>
<dbReference type="EMBL" id="AP009044">
    <property type="protein sequence ID" value="BAF55130.1"/>
    <property type="molecule type" value="Genomic_DNA"/>
</dbReference>
<dbReference type="RefSeq" id="WP_003857003.1">
    <property type="nucleotide sequence ID" value="NC_009342.1"/>
</dbReference>
<dbReference type="SMR" id="A4QFW4"/>
<dbReference type="KEGG" id="cgt:cgR_2128"/>
<dbReference type="HOGENOM" id="CLU_043473_1_1_11"/>
<dbReference type="PhylomeDB" id="A4QFW4"/>
<dbReference type="Proteomes" id="UP000006698">
    <property type="component" value="Chromosome"/>
</dbReference>
<dbReference type="GO" id="GO:0005737">
    <property type="term" value="C:cytoplasm"/>
    <property type="evidence" value="ECO:0007669"/>
    <property type="project" value="TreeGrafter"/>
</dbReference>
<dbReference type="GO" id="GO:0046872">
    <property type="term" value="F:metal ion binding"/>
    <property type="evidence" value="ECO:0007669"/>
    <property type="project" value="UniProtKB-KW"/>
</dbReference>
<dbReference type="GO" id="GO:0016791">
    <property type="term" value="F:phosphatase activity"/>
    <property type="evidence" value="ECO:0000314"/>
    <property type="project" value="UniProtKB"/>
</dbReference>
<dbReference type="GO" id="GO:0016052">
    <property type="term" value="P:carbohydrate catabolic process"/>
    <property type="evidence" value="ECO:0000315"/>
    <property type="project" value="UniProtKB"/>
</dbReference>
<dbReference type="CDD" id="cd07530">
    <property type="entry name" value="HAD_Pase_UmpH-like"/>
    <property type="match status" value="1"/>
</dbReference>
<dbReference type="FunFam" id="3.40.50.1000:FF:000016">
    <property type="entry name" value="HAD family hydrolase"/>
    <property type="match status" value="1"/>
</dbReference>
<dbReference type="Gene3D" id="3.40.50.1000">
    <property type="entry name" value="HAD superfamily/HAD-like"/>
    <property type="match status" value="2"/>
</dbReference>
<dbReference type="InterPro" id="IPR036412">
    <property type="entry name" value="HAD-like_sf"/>
</dbReference>
<dbReference type="InterPro" id="IPR006357">
    <property type="entry name" value="HAD-SF_hydro_IIA"/>
</dbReference>
<dbReference type="InterPro" id="IPR023214">
    <property type="entry name" value="HAD_sf"/>
</dbReference>
<dbReference type="NCBIfam" id="TIGR01460">
    <property type="entry name" value="HAD-SF-IIA"/>
    <property type="match status" value="1"/>
</dbReference>
<dbReference type="PANTHER" id="PTHR19288">
    <property type="entry name" value="4-NITROPHENYLPHOSPHATASE-RELATED"/>
    <property type="match status" value="1"/>
</dbReference>
<dbReference type="PANTHER" id="PTHR19288:SF46">
    <property type="entry name" value="HALOACID DEHALOGENASE-LIKE HYDROLASE DOMAIN-CONTAINING PROTEIN 2"/>
    <property type="match status" value="1"/>
</dbReference>
<dbReference type="Pfam" id="PF13344">
    <property type="entry name" value="Hydrolase_6"/>
    <property type="match status" value="1"/>
</dbReference>
<dbReference type="Pfam" id="PF13242">
    <property type="entry name" value="Hydrolase_like"/>
    <property type="match status" value="1"/>
</dbReference>
<dbReference type="PIRSF" id="PIRSF000915">
    <property type="entry name" value="PGP-type_phosphatase"/>
    <property type="match status" value="1"/>
</dbReference>
<dbReference type="SFLD" id="SFLDG01139">
    <property type="entry name" value="C2.A:_Pyridoxal_Phosphate_Phos"/>
    <property type="match status" value="1"/>
</dbReference>
<dbReference type="SFLD" id="SFLDS00003">
    <property type="entry name" value="Haloacid_Dehalogenase"/>
    <property type="match status" value="1"/>
</dbReference>
<dbReference type="SUPFAM" id="SSF56784">
    <property type="entry name" value="HAD-like"/>
    <property type="match status" value="1"/>
</dbReference>
<feature type="chain" id="PRO_0000439281" description="Dihydroxyacetone phosphatase">
    <location>
        <begin position="1"/>
        <end position="275"/>
    </location>
</feature>
<feature type="active site" description="Nucleophile" evidence="1">
    <location>
        <position position="10"/>
    </location>
</feature>
<feature type="active site" description="Proton donor/acceptor" evidence="1">
    <location>
        <position position="12"/>
    </location>
</feature>
<feature type="binding site" evidence="1">
    <location>
        <position position="10"/>
    </location>
    <ligand>
        <name>Mg(2+)</name>
        <dbReference type="ChEBI" id="CHEBI:18420"/>
    </ligand>
</feature>
<feature type="binding site" evidence="1">
    <location>
        <position position="12"/>
    </location>
    <ligand>
        <name>Mg(2+)</name>
        <dbReference type="ChEBI" id="CHEBI:18420"/>
    </ligand>
</feature>
<feature type="binding site" evidence="1">
    <location>
        <position position="206"/>
    </location>
    <ligand>
        <name>Mg(2+)</name>
        <dbReference type="ChEBI" id="CHEBI:18420"/>
    </ligand>
</feature>
<feature type="site" description="Orients Asp-12 for proton transfer during catalytic turnover" evidence="1">
    <location>
        <position position="56"/>
    </location>
</feature>
<proteinExistence type="evidence at protein level"/>
<reference key="1">
    <citation type="journal article" date="2007" name="Microbiology">
        <title>Comparative analysis of the Corynebacterium glutamicum group and complete genome sequence of strain R.</title>
        <authorList>
            <person name="Yukawa H."/>
            <person name="Omumasaba C.A."/>
            <person name="Nonaka H."/>
            <person name="Kos P."/>
            <person name="Okai N."/>
            <person name="Suzuki N."/>
            <person name="Suda M."/>
            <person name="Tsuge Y."/>
            <person name="Watanabe J."/>
            <person name="Ikeda Y."/>
            <person name="Vertes A.A."/>
            <person name="Inui M."/>
        </authorList>
    </citation>
    <scope>NUCLEOTIDE SEQUENCE [LARGE SCALE GENOMIC DNA]</scope>
    <source>
        <strain>R</strain>
    </source>
</reference>
<reference key="2">
    <citation type="journal article" date="2012" name="FEBS Lett.">
        <title>Identification of a HAD superfamily phosphatase, HdpA, involved in 1,3-dihydroxyacetone production during sugar catabolism in Corynebacterium glutamicum.</title>
        <authorList>
            <person name="Jojima T."/>
            <person name="Igari T."/>
            <person name="Gunji W."/>
            <person name="Suda M."/>
            <person name="Inui M."/>
            <person name="Yukawa H."/>
        </authorList>
    </citation>
    <scope>FUNCTION</scope>
    <scope>CATALYTIC ACTIVITY</scope>
    <scope>SUBSTRATE SPECIFICITY</scope>
    <scope>COFACTOR</scope>
    <scope>BIOPHYSICOCHEMICAL PROPERTIES</scope>
    <scope>SUBUNIT</scope>
    <scope>DISRUPTION PHENOTYPE</scope>
    <source>
        <strain>R</strain>
    </source>
</reference>
<protein>
    <recommendedName>
        <fullName evidence="3">Dihydroxyacetone phosphatase</fullName>
        <ecNumber evidence="2">3.1.3.-</ecNumber>
    </recommendedName>
</protein>
<comment type="function">
    <text evidence="2">Catalyzes dephosphorylation of dihydroxyacetone phosphate (DHAP) to produce 1,3-dihydroxyacetone (DHA). Is the main enzyme responsible for DHA production from catabolism of sugars (glucose, fructose, and sucrose) in C.glutamicum. Displays no activity toward nucleoside monophosphates (AMP, CMP, GMP, or UMP).</text>
</comment>
<comment type="catalytic activity">
    <reaction evidence="2">
        <text>dihydroxyacetone phosphate + H2O = dihydroxyacetone + phosphate</text>
        <dbReference type="Rhea" id="RHEA:51728"/>
        <dbReference type="ChEBI" id="CHEBI:15377"/>
        <dbReference type="ChEBI" id="CHEBI:16016"/>
        <dbReference type="ChEBI" id="CHEBI:43474"/>
        <dbReference type="ChEBI" id="CHEBI:57642"/>
    </reaction>
</comment>
<comment type="cofactor">
    <cofactor evidence="2">
        <name>Mg(2+)</name>
        <dbReference type="ChEBI" id="CHEBI:18420"/>
    </cofactor>
</comment>
<comment type="biophysicochemical properties">
    <kinetics>
        <text evidence="5">Does not show typical Michaelis-Menten type saturation kinetics even when DHAP concentration is increased to 38 mM, suggesting that substrate affinity of HdpA to DHAP is relatively low. This characteristic of HdpA seems to be consistent with the hypothesis of the overflow metabolism, according to which DHA is formed by the action of HdpA only when excess DHAP accumulates in cells.</text>
    </kinetics>
    <phDependence>
        <text evidence="2">Optimum pH is 5.5-8.0.</text>
    </phDependence>
</comment>
<comment type="subunit">
    <text evidence="2">Homohexamer.</text>
</comment>
<comment type="disruption phenotype">
    <text evidence="2">Inactivation of hdpA leads to a drastic decrease in DHA production from each of glucose, fructose, and sucrose. No dihydroxyacetone phosphatase activity is detected in the deletion mutant strain.</text>
</comment>
<comment type="similarity">
    <text evidence="4">Belongs to the HAD-like hydrolase superfamily.</text>
</comment>
<organism>
    <name type="scientific">Corynebacterium glutamicum (strain R)</name>
    <dbReference type="NCBI Taxonomy" id="340322"/>
    <lineage>
        <taxon>Bacteria</taxon>
        <taxon>Bacillati</taxon>
        <taxon>Actinomycetota</taxon>
        <taxon>Actinomycetes</taxon>
        <taxon>Mycobacteriales</taxon>
        <taxon>Corynebacteriaceae</taxon>
        <taxon>Corynebacterium</taxon>
    </lineage>
</organism>
<gene>
    <name evidence="3" type="primary">hdpA</name>
    <name evidence="6" type="ordered locus">cgR_2128</name>
</gene>